<evidence type="ECO:0000255" key="1">
    <source>
        <dbReference type="HAMAP-Rule" id="MF_01333"/>
    </source>
</evidence>
<evidence type="ECO:0000305" key="2"/>
<name>RL5_WOLSU</name>
<comment type="function">
    <text evidence="1">This is one of the proteins that bind and probably mediate the attachment of the 5S RNA into the large ribosomal subunit, where it forms part of the central protuberance. In the 70S ribosome it contacts protein S13 of the 30S subunit (bridge B1b), connecting the 2 subunits; this bridge is implicated in subunit movement. Contacts the P site tRNA; the 5S rRNA and some of its associated proteins might help stabilize positioning of ribosome-bound tRNAs.</text>
</comment>
<comment type="subunit">
    <text evidence="1">Part of the 50S ribosomal subunit; part of the 5S rRNA/L5/L18/L25 subcomplex. Contacts the 5S rRNA and the P site tRNA. Forms a bridge to the 30S subunit in the 70S ribosome.</text>
</comment>
<comment type="similarity">
    <text evidence="1">Belongs to the universal ribosomal protein uL5 family.</text>
</comment>
<reference key="1">
    <citation type="journal article" date="2003" name="Proc. Natl. Acad. Sci. U.S.A.">
        <title>Complete genome sequence and analysis of Wolinella succinogenes.</title>
        <authorList>
            <person name="Baar C."/>
            <person name="Eppinger M."/>
            <person name="Raddatz G."/>
            <person name="Simon J."/>
            <person name="Lanz C."/>
            <person name="Klimmek O."/>
            <person name="Nandakumar R."/>
            <person name="Gross R."/>
            <person name="Rosinus A."/>
            <person name="Keller H."/>
            <person name="Jagtap P."/>
            <person name="Linke B."/>
            <person name="Meyer F."/>
            <person name="Lederer H."/>
            <person name="Schuster S.C."/>
        </authorList>
    </citation>
    <scope>NUCLEOTIDE SEQUENCE [LARGE SCALE GENOMIC DNA]</scope>
    <source>
        <strain>ATCC 29543 / DSM 1740 / CCUG 13145 / JCM 31913 / LMG 7466 / NCTC 11488 / FDC 602W</strain>
    </source>
</reference>
<keyword id="KW-1185">Reference proteome</keyword>
<keyword id="KW-0687">Ribonucleoprotein</keyword>
<keyword id="KW-0689">Ribosomal protein</keyword>
<keyword id="KW-0694">RNA-binding</keyword>
<keyword id="KW-0699">rRNA-binding</keyword>
<keyword id="KW-0820">tRNA-binding</keyword>
<organism>
    <name type="scientific">Wolinella succinogenes (strain ATCC 29543 / DSM 1740 / CCUG 13145 / JCM 31913 / LMG 7466 / NCTC 11488 / FDC 602W)</name>
    <name type="common">Vibrio succinogenes</name>
    <dbReference type="NCBI Taxonomy" id="273121"/>
    <lineage>
        <taxon>Bacteria</taxon>
        <taxon>Pseudomonadati</taxon>
        <taxon>Campylobacterota</taxon>
        <taxon>Epsilonproteobacteria</taxon>
        <taxon>Campylobacterales</taxon>
        <taxon>Helicobacteraceae</taxon>
        <taxon>Wolinella</taxon>
    </lineage>
</organism>
<proteinExistence type="inferred from homology"/>
<sequence length="184" mass="20537">MYQLKKLYNEELKAKLSEELGIKNPMLLPKLEKIVISVGAGDHAKDTKVMQNIADTISLIAGQKAVITIAKKSVAGFKMREGMPMGVKVTLRGNQMYNFLEKLISIALPRVKDFRGVPRNGFDGRGNYSFGLNEQLMFPEVVYDDIMVSHGMNITMVTTTNNDKEAFKMLELFGMPFAKGRVNG</sequence>
<protein>
    <recommendedName>
        <fullName evidence="1">Large ribosomal subunit protein uL5</fullName>
    </recommendedName>
    <alternativeName>
        <fullName evidence="2">50S ribosomal protein L5</fullName>
    </alternativeName>
</protein>
<feature type="chain" id="PRO_0000125028" description="Large ribosomal subunit protein uL5">
    <location>
        <begin position="1"/>
        <end position="184"/>
    </location>
</feature>
<gene>
    <name evidence="1" type="primary">rplE</name>
    <name type="ordered locus">WS1704</name>
</gene>
<dbReference type="EMBL" id="BX571661">
    <property type="protein sequence ID" value="CAE10731.1"/>
    <property type="molecule type" value="Genomic_DNA"/>
</dbReference>
<dbReference type="RefSeq" id="WP_011139515.1">
    <property type="nucleotide sequence ID" value="NC_005090.1"/>
</dbReference>
<dbReference type="SMR" id="Q7M8E5"/>
<dbReference type="STRING" id="273121.WS1704"/>
<dbReference type="KEGG" id="wsu:WS1704"/>
<dbReference type="eggNOG" id="COG0094">
    <property type="taxonomic scope" value="Bacteria"/>
</dbReference>
<dbReference type="HOGENOM" id="CLU_061015_2_1_7"/>
<dbReference type="Proteomes" id="UP000000422">
    <property type="component" value="Chromosome"/>
</dbReference>
<dbReference type="GO" id="GO:1990904">
    <property type="term" value="C:ribonucleoprotein complex"/>
    <property type="evidence" value="ECO:0007669"/>
    <property type="project" value="UniProtKB-KW"/>
</dbReference>
<dbReference type="GO" id="GO:0005840">
    <property type="term" value="C:ribosome"/>
    <property type="evidence" value="ECO:0007669"/>
    <property type="project" value="UniProtKB-KW"/>
</dbReference>
<dbReference type="GO" id="GO:0019843">
    <property type="term" value="F:rRNA binding"/>
    <property type="evidence" value="ECO:0007669"/>
    <property type="project" value="UniProtKB-UniRule"/>
</dbReference>
<dbReference type="GO" id="GO:0003735">
    <property type="term" value="F:structural constituent of ribosome"/>
    <property type="evidence" value="ECO:0007669"/>
    <property type="project" value="InterPro"/>
</dbReference>
<dbReference type="GO" id="GO:0000049">
    <property type="term" value="F:tRNA binding"/>
    <property type="evidence" value="ECO:0007669"/>
    <property type="project" value="UniProtKB-UniRule"/>
</dbReference>
<dbReference type="GO" id="GO:0006412">
    <property type="term" value="P:translation"/>
    <property type="evidence" value="ECO:0007669"/>
    <property type="project" value="UniProtKB-UniRule"/>
</dbReference>
<dbReference type="FunFam" id="3.30.1440.10:FF:000001">
    <property type="entry name" value="50S ribosomal protein L5"/>
    <property type="match status" value="1"/>
</dbReference>
<dbReference type="Gene3D" id="3.30.1440.10">
    <property type="match status" value="1"/>
</dbReference>
<dbReference type="HAMAP" id="MF_01333_B">
    <property type="entry name" value="Ribosomal_uL5_B"/>
    <property type="match status" value="1"/>
</dbReference>
<dbReference type="InterPro" id="IPR002132">
    <property type="entry name" value="Ribosomal_uL5"/>
</dbReference>
<dbReference type="InterPro" id="IPR020930">
    <property type="entry name" value="Ribosomal_uL5_bac-type"/>
</dbReference>
<dbReference type="InterPro" id="IPR031309">
    <property type="entry name" value="Ribosomal_uL5_C"/>
</dbReference>
<dbReference type="InterPro" id="IPR020929">
    <property type="entry name" value="Ribosomal_uL5_CS"/>
</dbReference>
<dbReference type="InterPro" id="IPR022803">
    <property type="entry name" value="Ribosomal_uL5_dom_sf"/>
</dbReference>
<dbReference type="InterPro" id="IPR031310">
    <property type="entry name" value="Ribosomal_uL5_N"/>
</dbReference>
<dbReference type="NCBIfam" id="NF000585">
    <property type="entry name" value="PRK00010.1"/>
    <property type="match status" value="1"/>
</dbReference>
<dbReference type="PANTHER" id="PTHR11994">
    <property type="entry name" value="60S RIBOSOMAL PROTEIN L11-RELATED"/>
    <property type="match status" value="1"/>
</dbReference>
<dbReference type="Pfam" id="PF00281">
    <property type="entry name" value="Ribosomal_L5"/>
    <property type="match status" value="1"/>
</dbReference>
<dbReference type="Pfam" id="PF00673">
    <property type="entry name" value="Ribosomal_L5_C"/>
    <property type="match status" value="1"/>
</dbReference>
<dbReference type="PIRSF" id="PIRSF002161">
    <property type="entry name" value="Ribosomal_L5"/>
    <property type="match status" value="1"/>
</dbReference>
<dbReference type="SUPFAM" id="SSF55282">
    <property type="entry name" value="RL5-like"/>
    <property type="match status" value="1"/>
</dbReference>
<dbReference type="PROSITE" id="PS00358">
    <property type="entry name" value="RIBOSOMAL_L5"/>
    <property type="match status" value="1"/>
</dbReference>
<accession>Q7M8E5</accession>